<organism>
    <name type="scientific">Homo sapiens</name>
    <name type="common">Human</name>
    <dbReference type="NCBI Taxonomy" id="9606"/>
    <lineage>
        <taxon>Eukaryota</taxon>
        <taxon>Metazoa</taxon>
        <taxon>Chordata</taxon>
        <taxon>Craniata</taxon>
        <taxon>Vertebrata</taxon>
        <taxon>Euteleostomi</taxon>
        <taxon>Mammalia</taxon>
        <taxon>Eutheria</taxon>
        <taxon>Euarchontoglires</taxon>
        <taxon>Primates</taxon>
        <taxon>Haplorrhini</taxon>
        <taxon>Catarrhini</taxon>
        <taxon>Hominidae</taxon>
        <taxon>Homo</taxon>
    </lineage>
</organism>
<dbReference type="EMBL" id="AC022098">
    <property type="status" value="NOT_ANNOTATED_CDS"/>
    <property type="molecule type" value="Genomic_DNA"/>
</dbReference>
<dbReference type="EMBL" id="BC011002">
    <property type="status" value="NOT_ANNOTATED_CDS"/>
    <property type="molecule type" value="mRNA"/>
</dbReference>
<dbReference type="CCDS" id="CCDS77246.1"/>
<dbReference type="RefSeq" id="NP_001278220.1">
    <property type="nucleotide sequence ID" value="NM_001291291.2"/>
</dbReference>
<dbReference type="BioGRID" id="125235">
    <property type="interactions" value="4"/>
</dbReference>
<dbReference type="FunCoup" id="Q96FF7">
    <property type="interactions" value="5"/>
</dbReference>
<dbReference type="IntAct" id="Q96FF7">
    <property type="interactions" value="1"/>
</dbReference>
<dbReference type="MINT" id="Q96FF7"/>
<dbReference type="STRING" id="9606.ENSP00000465157"/>
<dbReference type="GlyGen" id="Q96FF7">
    <property type="glycosylation" value="2 sites, 1 O-linked glycan (2 sites)"/>
</dbReference>
<dbReference type="iPTMnet" id="Q96FF7"/>
<dbReference type="PhosphoSitePlus" id="Q96FF7"/>
<dbReference type="BioMuta" id="MISP3"/>
<dbReference type="DMDM" id="172045854"/>
<dbReference type="jPOST" id="Q96FF7"/>
<dbReference type="MassIVE" id="Q96FF7"/>
<dbReference type="PaxDb" id="9606-ENSP00000269720"/>
<dbReference type="PeptideAtlas" id="Q96FF7"/>
<dbReference type="Antibodypedia" id="50317">
    <property type="antibodies" value="3 antibodies from 3 providers"/>
</dbReference>
<dbReference type="DNASU" id="113230"/>
<dbReference type="Ensembl" id="ENST00000587086.3">
    <property type="protein sequence ID" value="ENSP00000465157.1"/>
    <property type="gene ID" value="ENSG00000141854.10"/>
</dbReference>
<dbReference type="Ensembl" id="ENST00000672552.1">
    <property type="protein sequence ID" value="ENSP00000500884.1"/>
    <property type="gene ID" value="ENSG00000288191.1"/>
</dbReference>
<dbReference type="GeneID" id="113230"/>
<dbReference type="KEGG" id="hsa:113230"/>
<dbReference type="MANE-Select" id="ENST00000587086.3">
    <property type="protein sequence ID" value="ENSP00000465157.1"/>
    <property type="RefSeq nucleotide sequence ID" value="NM_001291291.2"/>
    <property type="RefSeq protein sequence ID" value="NP_001278220.1"/>
</dbReference>
<dbReference type="UCSC" id="uc002mxz.4">
    <property type="organism name" value="human"/>
</dbReference>
<dbReference type="AGR" id="HGNC:26963"/>
<dbReference type="CTD" id="113230"/>
<dbReference type="GeneCards" id="MISP3"/>
<dbReference type="HGNC" id="HGNC:26963">
    <property type="gene designation" value="MISP3"/>
</dbReference>
<dbReference type="HPA" id="ENSG00000141854">
    <property type="expression patterns" value="Tissue enhanced (brain, kidney)"/>
</dbReference>
<dbReference type="neXtProt" id="NX_Q96FF7"/>
<dbReference type="OpenTargets" id="ENSG00000141854"/>
<dbReference type="VEuPathDB" id="HostDB:ENSG00000141854"/>
<dbReference type="eggNOG" id="ENOG502S5AK">
    <property type="taxonomic scope" value="Eukaryota"/>
</dbReference>
<dbReference type="GeneTree" id="ENSGT00940000154739"/>
<dbReference type="HOGENOM" id="CLU_1212229_0_0_1"/>
<dbReference type="InParanoid" id="Q96FF7"/>
<dbReference type="OMA" id="IWPPRRR"/>
<dbReference type="OrthoDB" id="9451814at2759"/>
<dbReference type="PAN-GO" id="Q96FF7">
    <property type="GO annotations" value="0 GO annotations based on evolutionary models"/>
</dbReference>
<dbReference type="PathwayCommons" id="Q96FF7"/>
<dbReference type="SignaLink" id="Q96FF7"/>
<dbReference type="BioGRID-ORCS" id="113230">
    <property type="hits" value="2 hits in 123 CRISPR screens"/>
</dbReference>
<dbReference type="GenomeRNAi" id="113230"/>
<dbReference type="Pharos" id="Q96FF7">
    <property type="development level" value="Tdark"/>
</dbReference>
<dbReference type="PRO" id="PR:Q96FF7"/>
<dbReference type="Proteomes" id="UP000005640">
    <property type="component" value="Chromosome 19"/>
</dbReference>
<dbReference type="RNAct" id="Q96FF7">
    <property type="molecule type" value="protein"/>
</dbReference>
<dbReference type="Bgee" id="ENSG00000141854">
    <property type="expression patterns" value="Expressed in male germ line stem cell (sensu Vertebrata) in testis and 92 other cell types or tissues"/>
</dbReference>
<dbReference type="ExpressionAtlas" id="Q96FF7">
    <property type="expression patterns" value="baseline and differential"/>
</dbReference>
<dbReference type="InterPro" id="IPR029304">
    <property type="entry name" value="AKAP2_C"/>
</dbReference>
<dbReference type="InterPro" id="IPR042779">
    <property type="entry name" value="MISP/MISP3-like"/>
</dbReference>
<dbReference type="PANTHER" id="PTHR18839:SF4">
    <property type="entry name" value="MISP FAMILY MEMBER 3"/>
    <property type="match status" value="1"/>
</dbReference>
<dbReference type="PANTHER" id="PTHR18839">
    <property type="entry name" value="MITOTIC INTERACTOR AND SUBSTRATE OF PLK1 MISP FAMILY MEMBER"/>
    <property type="match status" value="1"/>
</dbReference>
<dbReference type="Pfam" id="PF15304">
    <property type="entry name" value="AKAP2_C"/>
    <property type="match status" value="2"/>
</dbReference>
<comment type="similarity">
    <text evidence="2">Belongs to the MISP family.</text>
</comment>
<feature type="chain" id="PRO_0000318963" description="Uncharacterized protein MISP3">
    <location>
        <begin position="1"/>
        <end position="219"/>
    </location>
</feature>
<feature type="region of interest" description="Disordered" evidence="1">
    <location>
        <begin position="1"/>
        <end position="195"/>
    </location>
</feature>
<feature type="compositionally biased region" description="Basic and acidic residues" evidence="1">
    <location>
        <begin position="1"/>
        <end position="20"/>
    </location>
</feature>
<feature type="compositionally biased region" description="Basic and acidic residues" evidence="1">
    <location>
        <begin position="30"/>
        <end position="39"/>
    </location>
</feature>
<feature type="compositionally biased region" description="Basic and acidic residues" evidence="1">
    <location>
        <begin position="156"/>
        <end position="170"/>
    </location>
</feature>
<feature type="sequence variant" id="VAR_039392" description="In dbSNP:rs7258963.">
    <original>V</original>
    <variation>A</variation>
    <location>
        <position position="198"/>
    </location>
</feature>
<evidence type="ECO:0000256" key="1">
    <source>
        <dbReference type="SAM" id="MobiDB-lite"/>
    </source>
</evidence>
<evidence type="ECO:0000305" key="2"/>
<evidence type="ECO:0000312" key="3">
    <source>
        <dbReference type="HGNC" id="HGNC:26963"/>
    </source>
</evidence>
<gene>
    <name evidence="3" type="primary">MISP3</name>
</gene>
<name>MISP3_HUMAN</name>
<keyword id="KW-0175">Coiled coil</keyword>
<keyword id="KW-1267">Proteomics identification</keyword>
<keyword id="KW-1185">Reference proteome</keyword>
<reference key="1">
    <citation type="journal article" date="2004" name="Nature">
        <title>The DNA sequence and biology of human chromosome 19.</title>
        <authorList>
            <person name="Grimwood J."/>
            <person name="Gordon L.A."/>
            <person name="Olsen A.S."/>
            <person name="Terry A."/>
            <person name="Schmutz J."/>
            <person name="Lamerdin J.E."/>
            <person name="Hellsten U."/>
            <person name="Goodstein D."/>
            <person name="Couronne O."/>
            <person name="Tran-Gyamfi M."/>
            <person name="Aerts A."/>
            <person name="Altherr M."/>
            <person name="Ashworth L."/>
            <person name="Bajorek E."/>
            <person name="Black S."/>
            <person name="Branscomb E."/>
            <person name="Caenepeel S."/>
            <person name="Carrano A.V."/>
            <person name="Caoile C."/>
            <person name="Chan Y.M."/>
            <person name="Christensen M."/>
            <person name="Cleland C.A."/>
            <person name="Copeland A."/>
            <person name="Dalin E."/>
            <person name="Dehal P."/>
            <person name="Denys M."/>
            <person name="Detter J.C."/>
            <person name="Escobar J."/>
            <person name="Flowers D."/>
            <person name="Fotopulos D."/>
            <person name="Garcia C."/>
            <person name="Georgescu A.M."/>
            <person name="Glavina T."/>
            <person name="Gomez M."/>
            <person name="Gonzales E."/>
            <person name="Groza M."/>
            <person name="Hammon N."/>
            <person name="Hawkins T."/>
            <person name="Haydu L."/>
            <person name="Ho I."/>
            <person name="Huang W."/>
            <person name="Israni S."/>
            <person name="Jett J."/>
            <person name="Kadner K."/>
            <person name="Kimball H."/>
            <person name="Kobayashi A."/>
            <person name="Larionov V."/>
            <person name="Leem S.-H."/>
            <person name="Lopez F."/>
            <person name="Lou Y."/>
            <person name="Lowry S."/>
            <person name="Malfatti S."/>
            <person name="Martinez D."/>
            <person name="McCready P.M."/>
            <person name="Medina C."/>
            <person name="Morgan J."/>
            <person name="Nelson K."/>
            <person name="Nolan M."/>
            <person name="Ovcharenko I."/>
            <person name="Pitluck S."/>
            <person name="Pollard M."/>
            <person name="Popkie A.P."/>
            <person name="Predki P."/>
            <person name="Quan G."/>
            <person name="Ramirez L."/>
            <person name="Rash S."/>
            <person name="Retterer J."/>
            <person name="Rodriguez A."/>
            <person name="Rogers S."/>
            <person name="Salamov A."/>
            <person name="Salazar A."/>
            <person name="She X."/>
            <person name="Smith D."/>
            <person name="Slezak T."/>
            <person name="Solovyev V."/>
            <person name="Thayer N."/>
            <person name="Tice H."/>
            <person name="Tsai M."/>
            <person name="Ustaszewska A."/>
            <person name="Vo N."/>
            <person name="Wagner M."/>
            <person name="Wheeler J."/>
            <person name="Wu K."/>
            <person name="Xie G."/>
            <person name="Yang J."/>
            <person name="Dubchak I."/>
            <person name="Furey T.S."/>
            <person name="DeJong P."/>
            <person name="Dickson M."/>
            <person name="Gordon D."/>
            <person name="Eichler E.E."/>
            <person name="Pennacchio L.A."/>
            <person name="Richardson P."/>
            <person name="Stubbs L."/>
            <person name="Rokhsar D.S."/>
            <person name="Myers R.M."/>
            <person name="Rubin E.M."/>
            <person name="Lucas S.M."/>
        </authorList>
    </citation>
    <scope>NUCLEOTIDE SEQUENCE [LARGE SCALE GENOMIC DNA]</scope>
</reference>
<reference key="2">
    <citation type="journal article" date="2004" name="Genome Res.">
        <title>The status, quality, and expansion of the NIH full-length cDNA project: the Mammalian Gene Collection (MGC).</title>
        <authorList>
            <consortium name="The MGC Project Team"/>
        </authorList>
    </citation>
    <scope>NUCLEOTIDE SEQUENCE [LARGE SCALE MRNA]</scope>
    <source>
        <tissue>Lung</tissue>
    </source>
</reference>
<accession>Q96FF7</accession>
<sequence>METPIEREIRRSCEREESLRRSRGLSPGRAGRELVELRVRPVLNLPGPGPALPRALERARAGAQMQRDIEREAHRQAALARPAVPEPRARSPPQPLGELKRFFEAAAGSGSSAGAGDGAGPQRLPEPGGRPRSAVQGGCRVLGSAPPPFTPSLLEQEVRAVREREQELQRQRRSVYGTAEFKEPTPSLTASRGDGKLVVIWPPRRKVSENGLEQEERKP</sequence>
<protein>
    <recommendedName>
        <fullName evidence="2">Uncharacterized protein MISP3</fullName>
    </recommendedName>
    <alternativeName>
        <fullName evidence="3">MISP family member 3</fullName>
    </alternativeName>
</protein>
<proteinExistence type="evidence at protein level"/>